<proteinExistence type="inferred from homology"/>
<dbReference type="EMBL" id="AM270160">
    <property type="protein sequence ID" value="CAK39859.1"/>
    <property type="molecule type" value="Genomic_DNA"/>
</dbReference>
<dbReference type="RefSeq" id="XP_001392298.1">
    <property type="nucleotide sequence ID" value="XM_001392261.2"/>
</dbReference>
<dbReference type="SMR" id="A2QQA2"/>
<dbReference type="EnsemblFungi" id="CAK39859">
    <property type="protein sequence ID" value="CAK39859"/>
    <property type="gene ID" value="An08g01790"/>
</dbReference>
<dbReference type="GeneID" id="4982494"/>
<dbReference type="KEGG" id="ang:An08g01790"/>
<dbReference type="VEuPathDB" id="FungiDB:An08g01790"/>
<dbReference type="HOGENOM" id="CLU_044094_1_0_1"/>
<dbReference type="Proteomes" id="UP000006706">
    <property type="component" value="Chromosome 8R"/>
</dbReference>
<dbReference type="GO" id="GO:0016282">
    <property type="term" value="C:eukaryotic 43S preinitiation complex"/>
    <property type="evidence" value="ECO:0007669"/>
    <property type="project" value="UniProtKB-UniRule"/>
</dbReference>
<dbReference type="GO" id="GO:0033290">
    <property type="term" value="C:eukaryotic 48S preinitiation complex"/>
    <property type="evidence" value="ECO:0007669"/>
    <property type="project" value="UniProtKB-UniRule"/>
</dbReference>
<dbReference type="GO" id="GO:0005852">
    <property type="term" value="C:eukaryotic translation initiation factor 3 complex"/>
    <property type="evidence" value="ECO:0007669"/>
    <property type="project" value="UniProtKB-UniRule"/>
</dbReference>
<dbReference type="GO" id="GO:0008237">
    <property type="term" value="F:metallopeptidase activity"/>
    <property type="evidence" value="ECO:0007669"/>
    <property type="project" value="InterPro"/>
</dbReference>
<dbReference type="GO" id="GO:0003743">
    <property type="term" value="F:translation initiation factor activity"/>
    <property type="evidence" value="ECO:0007669"/>
    <property type="project" value="UniProtKB-UniRule"/>
</dbReference>
<dbReference type="GO" id="GO:0001732">
    <property type="term" value="P:formation of cytoplasmic translation initiation complex"/>
    <property type="evidence" value="ECO:0007669"/>
    <property type="project" value="UniProtKB-UniRule"/>
</dbReference>
<dbReference type="CDD" id="cd08065">
    <property type="entry name" value="MPN_eIF3h"/>
    <property type="match status" value="1"/>
</dbReference>
<dbReference type="FunFam" id="3.40.140.10:FF:000052">
    <property type="entry name" value="Eukaryotic translation initiation factor 3 subunit H"/>
    <property type="match status" value="1"/>
</dbReference>
<dbReference type="Gene3D" id="3.40.140.10">
    <property type="entry name" value="Cytidine Deaminase, domain 2"/>
    <property type="match status" value="1"/>
</dbReference>
<dbReference type="HAMAP" id="MF_03007">
    <property type="entry name" value="eIF3h"/>
    <property type="match status" value="1"/>
</dbReference>
<dbReference type="InterPro" id="IPR027524">
    <property type="entry name" value="eIF3h"/>
</dbReference>
<dbReference type="InterPro" id="IPR045810">
    <property type="entry name" value="eIF3h_C"/>
</dbReference>
<dbReference type="InterPro" id="IPR000555">
    <property type="entry name" value="JAMM/MPN+_dom"/>
</dbReference>
<dbReference type="InterPro" id="IPR050242">
    <property type="entry name" value="JAMM_MPN+_peptidase_M67A"/>
</dbReference>
<dbReference type="InterPro" id="IPR037518">
    <property type="entry name" value="MPN"/>
</dbReference>
<dbReference type="PANTHER" id="PTHR10410">
    <property type="entry name" value="EUKARYOTIC TRANSLATION INITIATION FACTOR 3 -RELATED"/>
    <property type="match status" value="1"/>
</dbReference>
<dbReference type="Pfam" id="PF19445">
    <property type="entry name" value="eIF3h_C"/>
    <property type="match status" value="2"/>
</dbReference>
<dbReference type="Pfam" id="PF01398">
    <property type="entry name" value="JAB"/>
    <property type="match status" value="1"/>
</dbReference>
<dbReference type="SMART" id="SM00232">
    <property type="entry name" value="JAB_MPN"/>
    <property type="match status" value="1"/>
</dbReference>
<dbReference type="PROSITE" id="PS50249">
    <property type="entry name" value="MPN"/>
    <property type="match status" value="1"/>
</dbReference>
<reference key="1">
    <citation type="journal article" date="2007" name="Nat. Biotechnol.">
        <title>Genome sequencing and analysis of the versatile cell factory Aspergillus niger CBS 513.88.</title>
        <authorList>
            <person name="Pel H.J."/>
            <person name="de Winde J.H."/>
            <person name="Archer D.B."/>
            <person name="Dyer P.S."/>
            <person name="Hofmann G."/>
            <person name="Schaap P.J."/>
            <person name="Turner G."/>
            <person name="de Vries R.P."/>
            <person name="Albang R."/>
            <person name="Albermann K."/>
            <person name="Andersen M.R."/>
            <person name="Bendtsen J.D."/>
            <person name="Benen J.A.E."/>
            <person name="van den Berg M."/>
            <person name="Breestraat S."/>
            <person name="Caddick M.X."/>
            <person name="Contreras R."/>
            <person name="Cornell M."/>
            <person name="Coutinho P.M."/>
            <person name="Danchin E.G.J."/>
            <person name="Debets A.J.M."/>
            <person name="Dekker P."/>
            <person name="van Dijck P.W.M."/>
            <person name="van Dijk A."/>
            <person name="Dijkhuizen L."/>
            <person name="Driessen A.J.M."/>
            <person name="d'Enfert C."/>
            <person name="Geysens S."/>
            <person name="Goosen C."/>
            <person name="Groot G.S.P."/>
            <person name="de Groot P.W.J."/>
            <person name="Guillemette T."/>
            <person name="Henrissat B."/>
            <person name="Herweijer M."/>
            <person name="van den Hombergh J.P.T.W."/>
            <person name="van den Hondel C.A.M.J.J."/>
            <person name="van der Heijden R.T.J.M."/>
            <person name="van der Kaaij R.M."/>
            <person name="Klis F.M."/>
            <person name="Kools H.J."/>
            <person name="Kubicek C.P."/>
            <person name="van Kuyk P.A."/>
            <person name="Lauber J."/>
            <person name="Lu X."/>
            <person name="van der Maarel M.J.E.C."/>
            <person name="Meulenberg R."/>
            <person name="Menke H."/>
            <person name="Mortimer M.A."/>
            <person name="Nielsen J."/>
            <person name="Oliver S.G."/>
            <person name="Olsthoorn M."/>
            <person name="Pal K."/>
            <person name="van Peij N.N.M.E."/>
            <person name="Ram A.F.J."/>
            <person name="Rinas U."/>
            <person name="Roubos J.A."/>
            <person name="Sagt C.M.J."/>
            <person name="Schmoll M."/>
            <person name="Sun J."/>
            <person name="Ussery D."/>
            <person name="Varga J."/>
            <person name="Vervecken W."/>
            <person name="van de Vondervoort P.J.J."/>
            <person name="Wedler H."/>
            <person name="Woesten H.A.B."/>
            <person name="Zeng A.-P."/>
            <person name="van Ooyen A.J.J."/>
            <person name="Visser J."/>
            <person name="Stam H."/>
        </authorList>
    </citation>
    <scope>NUCLEOTIDE SEQUENCE [LARGE SCALE GENOMIC DNA]</scope>
    <source>
        <strain>ATCC MYA-4892 / CBS 513.88 / FGSC A1513</strain>
    </source>
</reference>
<organism>
    <name type="scientific">Aspergillus niger (strain ATCC MYA-4892 / CBS 513.88 / FGSC A1513)</name>
    <dbReference type="NCBI Taxonomy" id="425011"/>
    <lineage>
        <taxon>Eukaryota</taxon>
        <taxon>Fungi</taxon>
        <taxon>Dikarya</taxon>
        <taxon>Ascomycota</taxon>
        <taxon>Pezizomycotina</taxon>
        <taxon>Eurotiomycetes</taxon>
        <taxon>Eurotiomycetidae</taxon>
        <taxon>Eurotiales</taxon>
        <taxon>Aspergillaceae</taxon>
        <taxon>Aspergillus</taxon>
        <taxon>Aspergillus subgen. Circumdati</taxon>
    </lineage>
</organism>
<keyword id="KW-0963">Cytoplasm</keyword>
<keyword id="KW-0396">Initiation factor</keyword>
<keyword id="KW-0648">Protein biosynthesis</keyword>
<keyword id="KW-1185">Reference proteome</keyword>
<accession>A2QQA2</accession>
<comment type="function">
    <text evidence="1">Component of the eukaryotic translation initiation factor 3 (eIF-3) complex, which is involved in protein synthesis of a specialized repertoire of mRNAs and, together with other initiation factors, stimulates binding of mRNA and methionyl-tRNAi to the 40S ribosome. The eIF-3 complex specifically targets and initiates translation of a subset of mRNAs involved in cell proliferation.</text>
</comment>
<comment type="subunit">
    <text evidence="1">Component of the eukaryotic translation initiation factor 3 (eIF-3) complex.</text>
</comment>
<comment type="subcellular location">
    <subcellularLocation>
        <location evidence="1">Cytoplasm</location>
    </subcellularLocation>
</comment>
<comment type="similarity">
    <text evidence="1">Belongs to the eIF-3 subunit H family.</text>
</comment>
<name>EIF3H_ASPNC</name>
<evidence type="ECO:0000255" key="1">
    <source>
        <dbReference type="HAMAP-Rule" id="MF_03007"/>
    </source>
</evidence>
<evidence type="ECO:0000255" key="2">
    <source>
        <dbReference type="PROSITE-ProRule" id="PRU01182"/>
    </source>
</evidence>
<gene>
    <name type="ORF">An08g01790</name>
</gene>
<sequence>MAEKEVPLTAVKVEALVVMKIIKHGSQAFPTTATGSIVGMDVDGTLEITNSFPFPVVEVPAESHFDNTAPNPAAAAPRAKANAAYEAEMVRMMREVNVDANNVGWYTSANMGNFINMNVIENQFFYQKEMNERTVALVHDVSRSAQGSLSLRAFRLSPKFMAAFKENKFTSEELQKSNLRYQDILVELPVEIHNSHLITSFIHQLQTPTQATPSDLPPSLAALESSQYAKSSVLAPNFDNLSLSIDPFLEKNCDLLLDSIEVHHTETNNFQYYQRSLAREQAKITAWQNKRKTENASRAALKQPLLPEDEWQRLFKLPQEPSRLDSMLNSRQVEQYARQVDSFVSATTGKMFAVKGNLLPGETAK</sequence>
<protein>
    <recommendedName>
        <fullName evidence="1">Eukaryotic translation initiation factor 3 subunit H</fullName>
        <shortName evidence="1">eIF3h</shortName>
    </recommendedName>
</protein>
<feature type="chain" id="PRO_0000365202" description="Eukaryotic translation initiation factor 3 subunit H">
    <location>
        <begin position="1"/>
        <end position="365"/>
    </location>
</feature>
<feature type="domain" description="MPN" evidence="2">
    <location>
        <begin position="11"/>
        <end position="160"/>
    </location>
</feature>